<comment type="catalytic activity">
    <reaction evidence="1">
        <text>tRNA(Leu) + L-leucine + ATP = L-leucyl-tRNA(Leu) + AMP + diphosphate</text>
        <dbReference type="Rhea" id="RHEA:11688"/>
        <dbReference type="Rhea" id="RHEA-COMP:9613"/>
        <dbReference type="Rhea" id="RHEA-COMP:9622"/>
        <dbReference type="ChEBI" id="CHEBI:30616"/>
        <dbReference type="ChEBI" id="CHEBI:33019"/>
        <dbReference type="ChEBI" id="CHEBI:57427"/>
        <dbReference type="ChEBI" id="CHEBI:78442"/>
        <dbReference type="ChEBI" id="CHEBI:78494"/>
        <dbReference type="ChEBI" id="CHEBI:456215"/>
        <dbReference type="EC" id="6.1.1.4"/>
    </reaction>
</comment>
<comment type="subcellular location">
    <subcellularLocation>
        <location evidence="1">Cytoplasm</location>
    </subcellularLocation>
</comment>
<comment type="similarity">
    <text evidence="1">Belongs to the class-I aminoacyl-tRNA synthetase family.</text>
</comment>
<organism>
    <name type="scientific">Ehrlichia canis (strain Jake)</name>
    <dbReference type="NCBI Taxonomy" id="269484"/>
    <lineage>
        <taxon>Bacteria</taxon>
        <taxon>Pseudomonadati</taxon>
        <taxon>Pseudomonadota</taxon>
        <taxon>Alphaproteobacteria</taxon>
        <taxon>Rickettsiales</taxon>
        <taxon>Anaplasmataceae</taxon>
        <taxon>Ehrlichia</taxon>
    </lineage>
</organism>
<accession>Q3YSH6</accession>
<keyword id="KW-0030">Aminoacyl-tRNA synthetase</keyword>
<keyword id="KW-0067">ATP-binding</keyword>
<keyword id="KW-0963">Cytoplasm</keyword>
<keyword id="KW-0436">Ligase</keyword>
<keyword id="KW-0547">Nucleotide-binding</keyword>
<keyword id="KW-0648">Protein biosynthesis</keyword>
<name>SYL_EHRCJ</name>
<gene>
    <name evidence="1" type="primary">leuS</name>
    <name type="ordered locus">Ecaj_0282</name>
</gene>
<protein>
    <recommendedName>
        <fullName evidence="1">Leucine--tRNA ligase</fullName>
        <ecNumber evidence="1">6.1.1.4</ecNumber>
    </recommendedName>
    <alternativeName>
        <fullName evidence="1">Leucyl-tRNA synthetase</fullName>
        <shortName evidence="1">LeuRS</shortName>
    </alternativeName>
</protein>
<proteinExistence type="inferred from homology"/>
<evidence type="ECO:0000255" key="1">
    <source>
        <dbReference type="HAMAP-Rule" id="MF_00049"/>
    </source>
</evidence>
<feature type="chain" id="PRO_0000334752" description="Leucine--tRNA ligase">
    <location>
        <begin position="1"/>
        <end position="829"/>
    </location>
</feature>
<feature type="short sequence motif" description="'HIGH' region">
    <location>
        <begin position="34"/>
        <end position="44"/>
    </location>
</feature>
<feature type="short sequence motif" description="'KMSKS' region">
    <location>
        <begin position="591"/>
        <end position="595"/>
    </location>
</feature>
<feature type="binding site" evidence="1">
    <location>
        <position position="594"/>
    </location>
    <ligand>
        <name>ATP</name>
        <dbReference type="ChEBI" id="CHEBI:30616"/>
    </ligand>
</feature>
<reference key="1">
    <citation type="journal article" date="2006" name="J. Bacteriol.">
        <title>The genome of the obligately intracellular bacterium Ehrlichia canis reveals themes of complex membrane structure and immune evasion strategies.</title>
        <authorList>
            <person name="Mavromatis K."/>
            <person name="Doyle C.K."/>
            <person name="Lykidis A."/>
            <person name="Ivanova N."/>
            <person name="Francino M.P."/>
            <person name="Chain P."/>
            <person name="Shin M."/>
            <person name="Malfatti S."/>
            <person name="Larimer F."/>
            <person name="Copeland A."/>
            <person name="Detter J.C."/>
            <person name="Land M."/>
            <person name="Richardson P.M."/>
            <person name="Yu X.J."/>
            <person name="Walker D.H."/>
            <person name="McBride J.W."/>
            <person name="Kyrpides N.C."/>
        </authorList>
    </citation>
    <scope>NUCLEOTIDE SEQUENCE [LARGE SCALE GENOMIC DNA]</scope>
    <source>
        <strain>Jake</strain>
    </source>
</reference>
<sequence length="829" mass="94858">MHYDFKKVEQDIQKKWNFYTDVKKAQCYVLEMFPYPSGNIHMGHLRNYTIGDVIARYKRACGINVFHPIGWDAFGLPAENAALSYNINPQTWTKNNIDNMRCQLKSIGLSYDWNKELATCDADYYKHEQAFFLDFLKCGLAYRKESLVNWDPIDQTVLANEQVIDGKGWRSGAVVEKRKLSQWFLKITDFAEELLNDLKVLDKWPEKVKLMQERWIGRSEGVVVDFEILNINKTLQVFTTCPHTLFGASFIAVSFDHPILQCVSDSDIIQQINDFDKNNLITDASSTVEKFGINSGLVVKHPFLCMNLPVYVVNFVLMDYATGAVFGCPAHDQRDFEFAKKYNLQIKQVVFPEIDIDLGKEAYVGSGTMKNSDFLDGMTVDEAKEAMIAKLQLLGIGDKMTYYRIHDWGISRQRYWGCPIPIIYCEKCGTVPVSRKDLPVTLPQDVDFTKSGNPLDNHPTWKYVKCPSCGMDAERETDTFDTFFESSWYFAAFCGTSSGIDKDTCNMLLPVDYYIGGIEHAVLHLLYSRFFCRALTKCGYFNVKEPFSSLITQGMVCHATYSDAQGNYLFPEEARKMMEEGQHVNVGRAEKMSKSKKNVVNLEYIIDKYGADTARLFILSDTPPDRDIEWLDDGIEGASKYLSKLWRMIVSYDQINLNFNVEDIPEDAIKYRRCVHKIVSDITSDLEFCRLNCAVAKFRELSNILSEMIRTSVNSDVVSEAICILIRVIEPFIPHIAEKLWENIGGKDMLWNQMWPKADTELLIERNVNIAVQVNGKFIRTLTVANNIDNDQLKSMALEMAKNKIGNSVVKNVYIIPKRAVNIVIEKLS</sequence>
<dbReference type="EC" id="6.1.1.4" evidence="1"/>
<dbReference type="EMBL" id="CP000107">
    <property type="protein sequence ID" value="AAZ68329.1"/>
    <property type="molecule type" value="Genomic_DNA"/>
</dbReference>
<dbReference type="RefSeq" id="WP_011304407.1">
    <property type="nucleotide sequence ID" value="NC_007354.1"/>
</dbReference>
<dbReference type="SMR" id="Q3YSH6"/>
<dbReference type="FunCoup" id="Q3YSH6">
    <property type="interactions" value="332"/>
</dbReference>
<dbReference type="STRING" id="269484.Ecaj_0282"/>
<dbReference type="KEGG" id="ecn:Ecaj_0282"/>
<dbReference type="eggNOG" id="COG0495">
    <property type="taxonomic scope" value="Bacteria"/>
</dbReference>
<dbReference type="HOGENOM" id="CLU_004427_0_0_5"/>
<dbReference type="InParanoid" id="Q3YSH6"/>
<dbReference type="Proteomes" id="UP000000435">
    <property type="component" value="Chromosome"/>
</dbReference>
<dbReference type="GO" id="GO:0005829">
    <property type="term" value="C:cytosol"/>
    <property type="evidence" value="ECO:0007669"/>
    <property type="project" value="TreeGrafter"/>
</dbReference>
<dbReference type="GO" id="GO:0002161">
    <property type="term" value="F:aminoacyl-tRNA deacylase activity"/>
    <property type="evidence" value="ECO:0007669"/>
    <property type="project" value="InterPro"/>
</dbReference>
<dbReference type="GO" id="GO:0005524">
    <property type="term" value="F:ATP binding"/>
    <property type="evidence" value="ECO:0007669"/>
    <property type="project" value="UniProtKB-UniRule"/>
</dbReference>
<dbReference type="GO" id="GO:0004823">
    <property type="term" value="F:leucine-tRNA ligase activity"/>
    <property type="evidence" value="ECO:0007669"/>
    <property type="project" value="UniProtKB-UniRule"/>
</dbReference>
<dbReference type="GO" id="GO:0006429">
    <property type="term" value="P:leucyl-tRNA aminoacylation"/>
    <property type="evidence" value="ECO:0007669"/>
    <property type="project" value="UniProtKB-UniRule"/>
</dbReference>
<dbReference type="CDD" id="cd07958">
    <property type="entry name" value="Anticodon_Ia_Leu_BEm"/>
    <property type="match status" value="1"/>
</dbReference>
<dbReference type="CDD" id="cd00812">
    <property type="entry name" value="LeuRS_core"/>
    <property type="match status" value="1"/>
</dbReference>
<dbReference type="FunFam" id="1.10.730.10:FF:000002">
    <property type="entry name" value="Leucine--tRNA ligase"/>
    <property type="match status" value="1"/>
</dbReference>
<dbReference type="Gene3D" id="3.40.50.620">
    <property type="entry name" value="HUPs"/>
    <property type="match status" value="2"/>
</dbReference>
<dbReference type="Gene3D" id="1.10.730.10">
    <property type="entry name" value="Isoleucyl-tRNA Synthetase, Domain 1"/>
    <property type="match status" value="1"/>
</dbReference>
<dbReference type="Gene3D" id="3.90.740.10">
    <property type="entry name" value="Valyl/Leucyl/Isoleucyl-tRNA synthetase, editing domain"/>
    <property type="match status" value="1"/>
</dbReference>
<dbReference type="HAMAP" id="MF_00049_B">
    <property type="entry name" value="Leu_tRNA_synth_B"/>
    <property type="match status" value="1"/>
</dbReference>
<dbReference type="InterPro" id="IPR001412">
    <property type="entry name" value="aa-tRNA-synth_I_CS"/>
</dbReference>
<dbReference type="InterPro" id="IPR002300">
    <property type="entry name" value="aa-tRNA-synth_Ia"/>
</dbReference>
<dbReference type="InterPro" id="IPR002302">
    <property type="entry name" value="Leu-tRNA-ligase"/>
</dbReference>
<dbReference type="InterPro" id="IPR025709">
    <property type="entry name" value="Leu_tRNA-synth_edit"/>
</dbReference>
<dbReference type="InterPro" id="IPR013155">
    <property type="entry name" value="M/V/L/I-tRNA-synth_anticd-bd"/>
</dbReference>
<dbReference type="InterPro" id="IPR015413">
    <property type="entry name" value="Methionyl/Leucyl_tRNA_Synth"/>
</dbReference>
<dbReference type="InterPro" id="IPR014729">
    <property type="entry name" value="Rossmann-like_a/b/a_fold"/>
</dbReference>
<dbReference type="InterPro" id="IPR009080">
    <property type="entry name" value="tRNAsynth_Ia_anticodon-bd"/>
</dbReference>
<dbReference type="InterPro" id="IPR009008">
    <property type="entry name" value="Val/Leu/Ile-tRNA-synth_edit"/>
</dbReference>
<dbReference type="NCBIfam" id="TIGR00396">
    <property type="entry name" value="leuS_bact"/>
    <property type="match status" value="1"/>
</dbReference>
<dbReference type="PANTHER" id="PTHR43740:SF2">
    <property type="entry name" value="LEUCINE--TRNA LIGASE, MITOCHONDRIAL"/>
    <property type="match status" value="1"/>
</dbReference>
<dbReference type="PANTHER" id="PTHR43740">
    <property type="entry name" value="LEUCYL-TRNA SYNTHETASE"/>
    <property type="match status" value="1"/>
</dbReference>
<dbReference type="Pfam" id="PF08264">
    <property type="entry name" value="Anticodon_1"/>
    <property type="match status" value="1"/>
</dbReference>
<dbReference type="Pfam" id="PF00133">
    <property type="entry name" value="tRNA-synt_1"/>
    <property type="match status" value="2"/>
</dbReference>
<dbReference type="Pfam" id="PF13603">
    <property type="entry name" value="tRNA-synt_1_2"/>
    <property type="match status" value="1"/>
</dbReference>
<dbReference type="Pfam" id="PF09334">
    <property type="entry name" value="tRNA-synt_1g"/>
    <property type="match status" value="1"/>
</dbReference>
<dbReference type="PRINTS" id="PR00985">
    <property type="entry name" value="TRNASYNTHLEU"/>
</dbReference>
<dbReference type="SUPFAM" id="SSF47323">
    <property type="entry name" value="Anticodon-binding domain of a subclass of class I aminoacyl-tRNA synthetases"/>
    <property type="match status" value="1"/>
</dbReference>
<dbReference type="SUPFAM" id="SSF52374">
    <property type="entry name" value="Nucleotidylyl transferase"/>
    <property type="match status" value="1"/>
</dbReference>
<dbReference type="SUPFAM" id="SSF50677">
    <property type="entry name" value="ValRS/IleRS/LeuRS editing domain"/>
    <property type="match status" value="1"/>
</dbReference>
<dbReference type="PROSITE" id="PS00178">
    <property type="entry name" value="AA_TRNA_LIGASE_I"/>
    <property type="match status" value="1"/>
</dbReference>